<gene>
    <name type="primary">ABL</name>
</gene>
<comment type="catalytic activity">
    <reaction evidence="3">
        <text>L-tyrosyl-[protein] + ATP = O-phospho-L-tyrosyl-[protein] + ADP + H(+)</text>
        <dbReference type="Rhea" id="RHEA:10596"/>
        <dbReference type="Rhea" id="RHEA-COMP:10136"/>
        <dbReference type="Rhea" id="RHEA-COMP:20101"/>
        <dbReference type="ChEBI" id="CHEBI:15378"/>
        <dbReference type="ChEBI" id="CHEBI:30616"/>
        <dbReference type="ChEBI" id="CHEBI:46858"/>
        <dbReference type="ChEBI" id="CHEBI:61978"/>
        <dbReference type="ChEBI" id="CHEBI:456216"/>
        <dbReference type="EC" id="2.7.10.2"/>
    </reaction>
</comment>
<comment type="subcellular location">
    <subcellularLocation>
        <location>Cytoplasm</location>
    </subcellularLocation>
</comment>
<comment type="similarity">
    <text evidence="2">Belongs to the protein kinase superfamily. Tyr protein kinase family. ABL subfamily.</text>
</comment>
<sequence>RETLDAVALLYMATQIASGMSYLEARNYIHRDLAARNCLVGDNKLVKVADFGLARLMRDDTYTAHAGAKFPIKW</sequence>
<protein>
    <recommendedName>
        <fullName>Tyrosine-protein kinase ABL</fullName>
        <ecNumber>2.7.10.2</ecNumber>
    </recommendedName>
</protein>
<accession>P11681</accession>
<feature type="chain" id="PRO_0000088053" description="Tyrosine-protein kinase ABL">
    <location>
        <begin position="1" status="less than"/>
        <end position="74" status="greater than"/>
    </location>
</feature>
<feature type="domain" description="Protein kinase" evidence="2">
    <location>
        <begin position="1" status="less than"/>
        <end position="74" status="greater than"/>
    </location>
</feature>
<feature type="short sequence motif" description="Kinase activation loop" evidence="1">
    <location>
        <begin position="50"/>
        <end position="74"/>
    </location>
</feature>
<feature type="active site" description="Proton acceptor" evidence="2 3">
    <location>
        <position position="32"/>
    </location>
</feature>
<feature type="non-terminal residue">
    <location>
        <position position="1"/>
    </location>
</feature>
<feature type="non-terminal residue">
    <location>
        <position position="74"/>
    </location>
</feature>
<name>ABL_CALVI</name>
<dbReference type="EC" id="2.7.10.2"/>
<dbReference type="EMBL" id="M18427">
    <property type="protein sequence ID" value="AAA28232.1"/>
    <property type="molecule type" value="Genomic_DNA"/>
</dbReference>
<dbReference type="PIR" id="A29597">
    <property type="entry name" value="A29597"/>
</dbReference>
<dbReference type="SMR" id="P11681"/>
<dbReference type="GO" id="GO:0005737">
    <property type="term" value="C:cytoplasm"/>
    <property type="evidence" value="ECO:0007669"/>
    <property type="project" value="UniProtKB-SubCell"/>
</dbReference>
<dbReference type="GO" id="GO:0005886">
    <property type="term" value="C:plasma membrane"/>
    <property type="evidence" value="ECO:0007669"/>
    <property type="project" value="TreeGrafter"/>
</dbReference>
<dbReference type="GO" id="GO:0043235">
    <property type="term" value="C:receptor complex"/>
    <property type="evidence" value="ECO:0007669"/>
    <property type="project" value="TreeGrafter"/>
</dbReference>
<dbReference type="GO" id="GO:0005524">
    <property type="term" value="F:ATP binding"/>
    <property type="evidence" value="ECO:0007669"/>
    <property type="project" value="UniProtKB-KW"/>
</dbReference>
<dbReference type="GO" id="GO:0004715">
    <property type="term" value="F:non-membrane spanning protein tyrosine kinase activity"/>
    <property type="evidence" value="ECO:0007669"/>
    <property type="project" value="UniProtKB-EC"/>
</dbReference>
<dbReference type="GO" id="GO:0004714">
    <property type="term" value="F:transmembrane receptor protein tyrosine kinase activity"/>
    <property type="evidence" value="ECO:0007669"/>
    <property type="project" value="TreeGrafter"/>
</dbReference>
<dbReference type="GO" id="GO:0007169">
    <property type="term" value="P:cell surface receptor protein tyrosine kinase signaling pathway"/>
    <property type="evidence" value="ECO:0007669"/>
    <property type="project" value="TreeGrafter"/>
</dbReference>
<dbReference type="Gene3D" id="1.10.510.10">
    <property type="entry name" value="Transferase(Phosphotransferase) domain 1"/>
    <property type="match status" value="1"/>
</dbReference>
<dbReference type="InterPro" id="IPR011009">
    <property type="entry name" value="Kinase-like_dom_sf"/>
</dbReference>
<dbReference type="InterPro" id="IPR000719">
    <property type="entry name" value="Prot_kinase_dom"/>
</dbReference>
<dbReference type="InterPro" id="IPR050122">
    <property type="entry name" value="RTK"/>
</dbReference>
<dbReference type="InterPro" id="IPR001245">
    <property type="entry name" value="Ser-Thr/Tyr_kinase_cat_dom"/>
</dbReference>
<dbReference type="InterPro" id="IPR008266">
    <property type="entry name" value="Tyr_kinase_AS"/>
</dbReference>
<dbReference type="PANTHER" id="PTHR24416:SF631">
    <property type="entry name" value="SERINE_THREONINE_TYROSINE KINASE 1"/>
    <property type="match status" value="1"/>
</dbReference>
<dbReference type="PANTHER" id="PTHR24416">
    <property type="entry name" value="TYROSINE-PROTEIN KINASE RECEPTOR"/>
    <property type="match status" value="1"/>
</dbReference>
<dbReference type="Pfam" id="PF07714">
    <property type="entry name" value="PK_Tyr_Ser-Thr"/>
    <property type="match status" value="1"/>
</dbReference>
<dbReference type="SUPFAM" id="SSF56112">
    <property type="entry name" value="Protein kinase-like (PK-like)"/>
    <property type="match status" value="1"/>
</dbReference>
<dbReference type="PROSITE" id="PS50011">
    <property type="entry name" value="PROTEIN_KINASE_DOM"/>
    <property type="match status" value="1"/>
</dbReference>
<dbReference type="PROSITE" id="PS00109">
    <property type="entry name" value="PROTEIN_KINASE_TYR"/>
    <property type="match status" value="1"/>
</dbReference>
<keyword id="KW-0067">ATP-binding</keyword>
<keyword id="KW-0963">Cytoplasm</keyword>
<keyword id="KW-0418">Kinase</keyword>
<keyword id="KW-0547">Nucleotide-binding</keyword>
<keyword id="KW-0808">Transferase</keyword>
<keyword id="KW-0829">Tyrosine-protein kinase</keyword>
<evidence type="ECO:0000250" key="1"/>
<evidence type="ECO:0000255" key="2">
    <source>
        <dbReference type="PROSITE-ProRule" id="PRU00159"/>
    </source>
</evidence>
<evidence type="ECO:0000255" key="3">
    <source>
        <dbReference type="PROSITE-ProRule" id="PRU10028"/>
    </source>
</evidence>
<reference key="1">
    <citation type="journal article" date="1987" name="Gene">
        <title>Isolation and characterization of abl gene sequences in Calliphora erythrocephala.</title>
        <authorList>
            <person name="Durica D.S."/>
            <person name="Restrepo M.A."/>
            <person name="Thomas T.L."/>
            <person name="Beckingham K."/>
        </authorList>
    </citation>
    <scope>NUCLEOTIDE SEQUENCE [GENOMIC DNA]</scope>
</reference>
<organism>
    <name type="scientific">Calliphora vicina</name>
    <name type="common">Blue blowfly</name>
    <name type="synonym">Calliphora erythrocephala</name>
    <dbReference type="NCBI Taxonomy" id="7373"/>
    <lineage>
        <taxon>Eukaryota</taxon>
        <taxon>Metazoa</taxon>
        <taxon>Ecdysozoa</taxon>
        <taxon>Arthropoda</taxon>
        <taxon>Hexapoda</taxon>
        <taxon>Insecta</taxon>
        <taxon>Pterygota</taxon>
        <taxon>Neoptera</taxon>
        <taxon>Endopterygota</taxon>
        <taxon>Diptera</taxon>
        <taxon>Brachycera</taxon>
        <taxon>Muscomorpha</taxon>
        <taxon>Oestroidea</taxon>
        <taxon>Calliphoridae</taxon>
        <taxon>Calliphorinae</taxon>
        <taxon>Calliphora</taxon>
    </lineage>
</organism>
<proteinExistence type="inferred from homology"/>